<keyword id="KW-0961">Cell wall biogenesis/degradation</keyword>
<keyword id="KW-0325">Glycoprotein</keyword>
<keyword id="KW-0328">Glycosyltransferase</keyword>
<keyword id="KW-0333">Golgi apparatus</keyword>
<keyword id="KW-0472">Membrane</keyword>
<keyword id="KW-1185">Reference proteome</keyword>
<keyword id="KW-0735">Signal-anchor</keyword>
<keyword id="KW-0808">Transferase</keyword>
<keyword id="KW-0812">Transmembrane</keyword>
<keyword id="KW-1133">Transmembrane helix</keyword>
<proteinExistence type="evidence at protein level"/>
<name>GAUTE_ARATH</name>
<reference key="1">
    <citation type="journal article" date="2000" name="Nature">
        <title>Sequence and analysis of chromosome 5 of the plant Arabidopsis thaliana.</title>
        <authorList>
            <person name="Tabata S."/>
            <person name="Kaneko T."/>
            <person name="Nakamura Y."/>
            <person name="Kotani H."/>
            <person name="Kato T."/>
            <person name="Asamizu E."/>
            <person name="Miyajima N."/>
            <person name="Sasamoto S."/>
            <person name="Kimura T."/>
            <person name="Hosouchi T."/>
            <person name="Kawashima K."/>
            <person name="Kohara M."/>
            <person name="Matsumoto M."/>
            <person name="Matsuno A."/>
            <person name="Muraki A."/>
            <person name="Nakayama S."/>
            <person name="Nakazaki N."/>
            <person name="Naruo K."/>
            <person name="Okumura S."/>
            <person name="Shinpo S."/>
            <person name="Takeuchi C."/>
            <person name="Wada T."/>
            <person name="Watanabe A."/>
            <person name="Yamada M."/>
            <person name="Yasuda M."/>
            <person name="Sato S."/>
            <person name="de la Bastide M."/>
            <person name="Huang E."/>
            <person name="Spiegel L."/>
            <person name="Gnoj L."/>
            <person name="O'Shaughnessy A."/>
            <person name="Preston R."/>
            <person name="Habermann K."/>
            <person name="Murray J."/>
            <person name="Johnson D."/>
            <person name="Rohlfing T."/>
            <person name="Nelson J."/>
            <person name="Stoneking T."/>
            <person name="Pepin K."/>
            <person name="Spieth J."/>
            <person name="Sekhon M."/>
            <person name="Armstrong J."/>
            <person name="Becker M."/>
            <person name="Belter E."/>
            <person name="Cordum H."/>
            <person name="Cordes M."/>
            <person name="Courtney L."/>
            <person name="Courtney W."/>
            <person name="Dante M."/>
            <person name="Du H."/>
            <person name="Edwards J."/>
            <person name="Fryman J."/>
            <person name="Haakensen B."/>
            <person name="Lamar E."/>
            <person name="Latreille P."/>
            <person name="Leonard S."/>
            <person name="Meyer R."/>
            <person name="Mulvaney E."/>
            <person name="Ozersky P."/>
            <person name="Riley A."/>
            <person name="Strowmatt C."/>
            <person name="Wagner-McPherson C."/>
            <person name="Wollam A."/>
            <person name="Yoakum M."/>
            <person name="Bell M."/>
            <person name="Dedhia N."/>
            <person name="Parnell L."/>
            <person name="Shah R."/>
            <person name="Rodriguez M."/>
            <person name="Hoon See L."/>
            <person name="Vil D."/>
            <person name="Baker J."/>
            <person name="Kirchoff K."/>
            <person name="Toth K."/>
            <person name="King L."/>
            <person name="Bahret A."/>
            <person name="Miller B."/>
            <person name="Marra M.A."/>
            <person name="Martienssen R."/>
            <person name="McCombie W.R."/>
            <person name="Wilson R.K."/>
            <person name="Murphy G."/>
            <person name="Bancroft I."/>
            <person name="Volckaert G."/>
            <person name="Wambutt R."/>
            <person name="Duesterhoeft A."/>
            <person name="Stiekema W."/>
            <person name="Pohl T."/>
            <person name="Entian K.-D."/>
            <person name="Terryn N."/>
            <person name="Hartley N."/>
            <person name="Bent E."/>
            <person name="Johnson S."/>
            <person name="Langham S.-A."/>
            <person name="McCullagh B."/>
            <person name="Robben J."/>
            <person name="Grymonprez B."/>
            <person name="Zimmermann W."/>
            <person name="Ramsperger U."/>
            <person name="Wedler H."/>
            <person name="Balke K."/>
            <person name="Wedler E."/>
            <person name="Peters S."/>
            <person name="van Staveren M."/>
            <person name="Dirkse W."/>
            <person name="Mooijman P."/>
            <person name="Klein Lankhorst R."/>
            <person name="Weitzenegger T."/>
            <person name="Bothe G."/>
            <person name="Rose M."/>
            <person name="Hauf J."/>
            <person name="Berneiser S."/>
            <person name="Hempel S."/>
            <person name="Feldpausch M."/>
            <person name="Lamberth S."/>
            <person name="Villarroel R."/>
            <person name="Gielen J."/>
            <person name="Ardiles W."/>
            <person name="Bents O."/>
            <person name="Lemcke K."/>
            <person name="Kolesov G."/>
            <person name="Mayer K.F.X."/>
            <person name="Rudd S."/>
            <person name="Schoof H."/>
            <person name="Schueller C."/>
            <person name="Zaccaria P."/>
            <person name="Mewes H.-W."/>
            <person name="Bevan M."/>
            <person name="Fransz P.F."/>
        </authorList>
    </citation>
    <scope>NUCLEOTIDE SEQUENCE [LARGE SCALE GENOMIC DNA]</scope>
    <source>
        <strain>cv. Columbia</strain>
    </source>
</reference>
<reference key="2">
    <citation type="journal article" date="2017" name="Plant J.">
        <title>Araport11: a complete reannotation of the Arabidopsis thaliana reference genome.</title>
        <authorList>
            <person name="Cheng C.Y."/>
            <person name="Krishnakumar V."/>
            <person name="Chan A.P."/>
            <person name="Thibaud-Nissen F."/>
            <person name="Schobel S."/>
            <person name="Town C.D."/>
        </authorList>
    </citation>
    <scope>GENOME REANNOTATION</scope>
    <source>
        <strain>cv. Columbia</strain>
    </source>
</reference>
<reference key="3">
    <citation type="journal article" date="2002" name="Science">
        <title>Functional annotation of a full-length Arabidopsis cDNA collection.</title>
        <authorList>
            <person name="Seki M."/>
            <person name="Narusaka M."/>
            <person name="Kamiya A."/>
            <person name="Ishida J."/>
            <person name="Satou M."/>
            <person name="Sakurai T."/>
            <person name="Nakajima M."/>
            <person name="Enju A."/>
            <person name="Akiyama K."/>
            <person name="Oono Y."/>
            <person name="Muramatsu M."/>
            <person name="Hayashizaki Y."/>
            <person name="Kawai J."/>
            <person name="Carninci P."/>
            <person name="Itoh M."/>
            <person name="Ishii Y."/>
            <person name="Arakawa T."/>
            <person name="Shibata K."/>
            <person name="Shinagawa A."/>
            <person name="Shinozaki K."/>
        </authorList>
    </citation>
    <scope>NUCLEOTIDE SEQUENCE [LARGE SCALE MRNA]</scope>
    <source>
        <strain>cv. Columbia</strain>
    </source>
</reference>
<reference key="4">
    <citation type="journal article" date="2003" name="Science">
        <title>Empirical analysis of transcriptional activity in the Arabidopsis genome.</title>
        <authorList>
            <person name="Yamada K."/>
            <person name="Lim J."/>
            <person name="Dale J.M."/>
            <person name="Chen H."/>
            <person name="Shinn P."/>
            <person name="Palm C.J."/>
            <person name="Southwick A.M."/>
            <person name="Wu H.C."/>
            <person name="Kim C.J."/>
            <person name="Nguyen M."/>
            <person name="Pham P.K."/>
            <person name="Cheuk R.F."/>
            <person name="Karlin-Newmann G."/>
            <person name="Liu S.X."/>
            <person name="Lam B."/>
            <person name="Sakano H."/>
            <person name="Wu T."/>
            <person name="Yu G."/>
            <person name="Miranda M."/>
            <person name="Quach H.L."/>
            <person name="Tripp M."/>
            <person name="Chang C.H."/>
            <person name="Lee J.M."/>
            <person name="Toriumi M.J."/>
            <person name="Chan M.M."/>
            <person name="Tang C.C."/>
            <person name="Onodera C.S."/>
            <person name="Deng J.M."/>
            <person name="Akiyama K."/>
            <person name="Ansari Y."/>
            <person name="Arakawa T."/>
            <person name="Banh J."/>
            <person name="Banno F."/>
            <person name="Bowser L."/>
            <person name="Brooks S.Y."/>
            <person name="Carninci P."/>
            <person name="Chao Q."/>
            <person name="Choy N."/>
            <person name="Enju A."/>
            <person name="Goldsmith A.D."/>
            <person name="Gurjal M."/>
            <person name="Hansen N.F."/>
            <person name="Hayashizaki Y."/>
            <person name="Johnson-Hopson C."/>
            <person name="Hsuan V.W."/>
            <person name="Iida K."/>
            <person name="Karnes M."/>
            <person name="Khan S."/>
            <person name="Koesema E."/>
            <person name="Ishida J."/>
            <person name="Jiang P.X."/>
            <person name="Jones T."/>
            <person name="Kawai J."/>
            <person name="Kamiya A."/>
            <person name="Meyers C."/>
            <person name="Nakajima M."/>
            <person name="Narusaka M."/>
            <person name="Seki M."/>
            <person name="Sakurai T."/>
            <person name="Satou M."/>
            <person name="Tamse R."/>
            <person name="Vaysberg M."/>
            <person name="Wallender E.K."/>
            <person name="Wong C."/>
            <person name="Yamamura Y."/>
            <person name="Yuan S."/>
            <person name="Shinozaki K."/>
            <person name="Davis R.W."/>
            <person name="Theologis A."/>
            <person name="Ecker J.R."/>
        </authorList>
    </citation>
    <scope>NUCLEOTIDE SEQUENCE [LARGE SCALE MRNA]</scope>
    <source>
        <strain>cv. Columbia</strain>
    </source>
</reference>
<reference key="5">
    <citation type="journal article" date="2006" name="Proc. Natl. Acad. Sci. U.S.A.">
        <title>Functional identification of an Arabidopsis pectin biosynthetic homogalacturonan galacturonosyltransferase.</title>
        <authorList>
            <person name="Sterling J.D."/>
            <person name="Atmodjo M.A."/>
            <person name="Inwood S.E."/>
            <person name="Kumar Kolli V.S."/>
            <person name="Quigley H.F."/>
            <person name="Hahn M.G."/>
            <person name="Mohnen D."/>
        </authorList>
    </citation>
    <scope>GENE FAMILY</scope>
    <scope>NOMENCLATURE</scope>
</reference>
<reference key="6">
    <citation type="journal article" date="2009" name="Mol. Plant">
        <title>Arabidopsis thaliana T-DNA mutants implicate GAUT genes in the biosynthesis of pectin and xylan in cell walls and seed testa.</title>
        <authorList>
            <person name="Caffall K.H."/>
            <person name="Pattathil S."/>
            <person name="Phillips S.E."/>
            <person name="Hahn M.G."/>
            <person name="Mohnen D."/>
        </authorList>
    </citation>
    <scope>TISSUE SPECIFICITY</scope>
    <scope>DISRUPTION PHENOTYPE</scope>
    <scope>CATALYTIC ACTIVITY</scope>
</reference>
<reference key="7">
    <citation type="journal article" date="2013" name="Mol. Plant">
        <title>Arabidopsis galacturonosyltransferase (GAUT) 13 and GAUT14 have redundant functions in pollen tube growth.</title>
        <authorList>
            <person name="Wang L."/>
            <person name="Wang W."/>
            <person name="Wang Y.-Q."/>
            <person name="Liu Y.-Y."/>
            <person name="Wang J.-X."/>
            <person name="Zhang X.-Q."/>
            <person name="Ye D."/>
            <person name="Chen L.-Q."/>
        </authorList>
    </citation>
    <scope>FUNCTION</scope>
    <scope>DISRUPTION PHENOTYPE</scope>
    <scope>SUBCELLULAR LOCATION</scope>
    <scope>TISSUE SPECIFICITY</scope>
    <scope>DEVELOPMENTAL STAGE</scope>
    <source>
        <strain>cv. Columbia</strain>
        <strain>cv. Wassilewskija</strain>
    </source>
</reference>
<accession>Q8GWT1</accession>
<accession>Q9LF35</accession>
<protein>
    <recommendedName>
        <fullName evidence="5">Probable galacturonosyltransferase 14</fullName>
        <ecNumber evidence="7">2.4.1.-</ecNumber>
    </recommendedName>
</protein>
<feature type="chain" id="PRO_0000392564" description="Probable galacturonosyltransferase 14">
    <location>
        <begin position="1"/>
        <end position="532"/>
    </location>
</feature>
<feature type="topological domain" description="Cytoplasmic" evidence="2">
    <location>
        <begin position="1"/>
        <end position="40"/>
    </location>
</feature>
<feature type="transmembrane region" description="Helical; Signal-anchor for type II membrane protein" evidence="2">
    <location>
        <begin position="41"/>
        <end position="61"/>
    </location>
</feature>
<feature type="topological domain" description="Lumenal" evidence="2">
    <location>
        <begin position="62"/>
        <end position="532"/>
    </location>
</feature>
<feature type="glycosylation site" description="N-linked (GlcNAc...) asparagine" evidence="2">
    <location>
        <position position="305"/>
    </location>
</feature>
<feature type="glycosylation site" description="N-linked (GlcNAc...) asparagine" evidence="2">
    <location>
        <position position="395"/>
    </location>
</feature>
<feature type="glycosylation site" description="N-linked (GlcNAc...) asparagine" evidence="2">
    <location>
        <position position="444"/>
    </location>
</feature>
<feature type="glycosylation site" description="N-linked (GlcNAc...) asparagine" evidence="2">
    <location>
        <position position="519"/>
    </location>
</feature>
<gene>
    <name evidence="5" type="primary">GAUT14</name>
    <name evidence="8" type="ordered locus">At5g15470</name>
    <name evidence="9" type="ORF">T20K14.80</name>
</gene>
<evidence type="ECO:0000250" key="1">
    <source>
        <dbReference type="UniProtKB" id="Q9LE59"/>
    </source>
</evidence>
<evidence type="ECO:0000255" key="2"/>
<evidence type="ECO:0000269" key="3">
    <source>
    </source>
</evidence>
<evidence type="ECO:0000269" key="4">
    <source>
    </source>
</evidence>
<evidence type="ECO:0000303" key="5">
    <source>
    </source>
</evidence>
<evidence type="ECO:0000305" key="6"/>
<evidence type="ECO:0000305" key="7">
    <source>
    </source>
</evidence>
<evidence type="ECO:0000312" key="8">
    <source>
        <dbReference type="Araport" id="AT5G15470"/>
    </source>
</evidence>
<evidence type="ECO:0000312" key="9">
    <source>
        <dbReference type="EMBL" id="CAC01746.1"/>
    </source>
</evidence>
<organism>
    <name type="scientific">Arabidopsis thaliana</name>
    <name type="common">Mouse-ear cress</name>
    <dbReference type="NCBI Taxonomy" id="3702"/>
    <lineage>
        <taxon>Eukaryota</taxon>
        <taxon>Viridiplantae</taxon>
        <taxon>Streptophyta</taxon>
        <taxon>Embryophyta</taxon>
        <taxon>Tracheophyta</taxon>
        <taxon>Spermatophyta</taxon>
        <taxon>Magnoliopsida</taxon>
        <taxon>eudicotyledons</taxon>
        <taxon>Gunneridae</taxon>
        <taxon>Pentapetalae</taxon>
        <taxon>rosids</taxon>
        <taxon>malvids</taxon>
        <taxon>Brassicales</taxon>
        <taxon>Brassicaceae</taxon>
        <taxon>Camelineae</taxon>
        <taxon>Arabidopsis</taxon>
    </lineage>
</organism>
<dbReference type="EC" id="2.4.1.-" evidence="7"/>
<dbReference type="EMBL" id="AL391143">
    <property type="protein sequence ID" value="CAC01746.1"/>
    <property type="status" value="ALT_SEQ"/>
    <property type="molecule type" value="Genomic_DNA"/>
</dbReference>
<dbReference type="EMBL" id="CP002688">
    <property type="protein sequence ID" value="AED92165.1"/>
    <property type="molecule type" value="Genomic_DNA"/>
</dbReference>
<dbReference type="EMBL" id="AK118651">
    <property type="protein sequence ID" value="BAC43247.1"/>
    <property type="molecule type" value="mRNA"/>
</dbReference>
<dbReference type="EMBL" id="BT005899">
    <property type="protein sequence ID" value="AAO64834.1"/>
    <property type="molecule type" value="mRNA"/>
</dbReference>
<dbReference type="PIR" id="T51525">
    <property type="entry name" value="T51525"/>
</dbReference>
<dbReference type="RefSeq" id="NP_197051.2">
    <property type="nucleotide sequence ID" value="NM_121551.4"/>
</dbReference>
<dbReference type="FunCoup" id="Q8GWT1">
    <property type="interactions" value="278"/>
</dbReference>
<dbReference type="STRING" id="3702.Q8GWT1"/>
<dbReference type="CAZy" id="GT8">
    <property type="family name" value="Glycosyltransferase Family 8"/>
</dbReference>
<dbReference type="GlyCosmos" id="Q8GWT1">
    <property type="glycosylation" value="4 sites, No reported glycans"/>
</dbReference>
<dbReference type="GlyGen" id="Q8GWT1">
    <property type="glycosylation" value="4 sites"/>
</dbReference>
<dbReference type="PaxDb" id="3702-AT5G15470.1"/>
<dbReference type="ProteomicsDB" id="222164"/>
<dbReference type="EnsemblPlants" id="AT5G15470.1">
    <property type="protein sequence ID" value="AT5G15470.1"/>
    <property type="gene ID" value="AT5G15470"/>
</dbReference>
<dbReference type="GeneID" id="831400"/>
<dbReference type="Gramene" id="AT5G15470.1">
    <property type="protein sequence ID" value="AT5G15470.1"/>
    <property type="gene ID" value="AT5G15470"/>
</dbReference>
<dbReference type="KEGG" id="ath:AT5G15470"/>
<dbReference type="Araport" id="AT5G15470"/>
<dbReference type="TAIR" id="AT5G15470">
    <property type="gene designation" value="GAUT14"/>
</dbReference>
<dbReference type="eggNOG" id="ENOG502QQKV">
    <property type="taxonomic scope" value="Eukaryota"/>
</dbReference>
<dbReference type="HOGENOM" id="CLU_010770_5_1_1"/>
<dbReference type="InParanoid" id="Q8GWT1"/>
<dbReference type="OMA" id="NAYHHFI"/>
<dbReference type="OrthoDB" id="411524at2759"/>
<dbReference type="PhylomeDB" id="Q8GWT1"/>
<dbReference type="UniPathway" id="UPA00845"/>
<dbReference type="PRO" id="PR:Q8GWT1"/>
<dbReference type="Proteomes" id="UP000006548">
    <property type="component" value="Chromosome 5"/>
</dbReference>
<dbReference type="ExpressionAtlas" id="Q8GWT1">
    <property type="expression patterns" value="baseline and differential"/>
</dbReference>
<dbReference type="GO" id="GO:0005794">
    <property type="term" value="C:Golgi apparatus"/>
    <property type="evidence" value="ECO:0000314"/>
    <property type="project" value="TAIR"/>
</dbReference>
<dbReference type="GO" id="GO:0000139">
    <property type="term" value="C:Golgi membrane"/>
    <property type="evidence" value="ECO:0007669"/>
    <property type="project" value="UniProtKB-SubCell"/>
</dbReference>
<dbReference type="GO" id="GO:0090406">
    <property type="term" value="C:pollen tube"/>
    <property type="evidence" value="ECO:0000314"/>
    <property type="project" value="TAIR"/>
</dbReference>
<dbReference type="GO" id="GO:0047262">
    <property type="term" value="F:polygalacturonate 4-alpha-galacturonosyltransferase activity"/>
    <property type="evidence" value="ECO:0000250"/>
    <property type="project" value="TAIR"/>
</dbReference>
<dbReference type="GO" id="GO:0052325">
    <property type="term" value="P:cell wall pectin biosynthetic process"/>
    <property type="evidence" value="ECO:0000316"/>
    <property type="project" value="TAIR"/>
</dbReference>
<dbReference type="GO" id="GO:0048358">
    <property type="term" value="P:mucilage pectin biosynthetic process"/>
    <property type="evidence" value="ECO:0000315"/>
    <property type="project" value="TAIR"/>
</dbReference>
<dbReference type="GO" id="GO:0009555">
    <property type="term" value="P:pollen development"/>
    <property type="evidence" value="ECO:0000316"/>
    <property type="project" value="TAIR"/>
</dbReference>
<dbReference type="GO" id="GO:0009860">
    <property type="term" value="P:pollen tube growth"/>
    <property type="evidence" value="ECO:0000316"/>
    <property type="project" value="TAIR"/>
</dbReference>
<dbReference type="CDD" id="cd06429">
    <property type="entry name" value="GT8_like_1"/>
    <property type="match status" value="1"/>
</dbReference>
<dbReference type="Gene3D" id="3.90.550.10">
    <property type="entry name" value="Spore Coat Polysaccharide Biosynthesis Protein SpsA, Chain A"/>
    <property type="match status" value="1"/>
</dbReference>
<dbReference type="InterPro" id="IPR029993">
    <property type="entry name" value="GAUT"/>
</dbReference>
<dbReference type="InterPro" id="IPR002495">
    <property type="entry name" value="Glyco_trans_8"/>
</dbReference>
<dbReference type="InterPro" id="IPR029044">
    <property type="entry name" value="Nucleotide-diphossugar_trans"/>
</dbReference>
<dbReference type="PANTHER" id="PTHR32116:SF98">
    <property type="entry name" value="GALACTURONOSYLTRANSFERASE 14-RELATED"/>
    <property type="match status" value="1"/>
</dbReference>
<dbReference type="PANTHER" id="PTHR32116">
    <property type="entry name" value="GALACTURONOSYLTRANSFERASE 4-RELATED"/>
    <property type="match status" value="1"/>
</dbReference>
<dbReference type="Pfam" id="PF01501">
    <property type="entry name" value="Glyco_transf_8"/>
    <property type="match status" value="1"/>
</dbReference>
<dbReference type="SUPFAM" id="SSF53448">
    <property type="entry name" value="Nucleotide-diphospho-sugar transferases"/>
    <property type="match status" value="1"/>
</dbReference>
<sequence length="532" mass="60823">MQLHISPSMRSITISSSNEFIDLMKIKVAARHISYRTLFHTILILAFLLPFVFILTAVVTLEGVNKCSSIDCLGRRIGPRLLGRVDDSERLARDFYKILNEVSTQEIPDGLKLPNSFSQLVSDMKNNHYDAKTFALVLRAMMEKFERDMRESKFAELMNKHFAASSIPKGIHCLSLRLTDEYSSNAHARRQLPSPEFLPVLSDNAYHHFILSTDNILAASVVVSSAVQSSSKPEKIVFHIITDKKTYAGMHSWFALNSVAPAIVEVKGVHQFDWLTRENVPVLEAVESHNGVRDYYHGNHVAGANLTETTPRTFASKLQSRSPKYISLLNHLRIYIPELFPNLDKVVFLDDDIVVQGDLTPLWDVDLGGKVNGAVETCRGEDEWVMSKRLRNYFNFSHPLIAKHLDPEECAWAYGMNIFDLQAWRKTNIRETYHSWLRENLKSNLTMWKLGTLPPALIAFKGHVHIIDSSWHMLGLGYQSKTNIENVKKAAVIHYNGQSKPWLEIGFEHLRPFWTKYVNYSNDFIKNCHILE</sequence>
<comment type="function">
    <text evidence="1 4">May be involved in pectin and/or xylans biosynthesis in cell walls (By similarity). Together with GAUT13, required for pollen tube growth, possibly through the regulation of pectin biosynthesis and repartition in the pollen tube wall (PubMed:23709340).</text>
</comment>
<comment type="pathway">
    <text evidence="1">Glycan metabolism; pectin biosynthesis.</text>
</comment>
<comment type="subcellular location">
    <subcellularLocation>
        <location evidence="4">Golgi apparatus membrane</location>
        <topology evidence="2">Single-pass type II membrane protein</topology>
    </subcellularLocation>
</comment>
<comment type="tissue specificity">
    <text evidence="3 4">Expressed in roots, inflorescences, siliques, leaves and stems (PubMed:19825675). Accumulates in pollen grains (PubMed:23709340).</text>
</comment>
<comment type="developmental stage">
    <text evidence="4">Strongly expressed in pollen grains and pollen tubes.</text>
</comment>
<comment type="disruption phenotype">
    <text evidence="3 4">No obvious phenotype (PubMed:19825675). Increased galacturonic acid and Gal content in cell wall, but reduced xylose and rhamnose content (PubMed:19825675). The gaut13 gaut14 double mutant is defective in male gametophyte function; swollen pollen tubes disturbed in elongation, and characterized by a disorganized outer layer cell wall with an altered repartition of pectin (e.g. homogalacturonan) (PubMed:23709340).</text>
</comment>
<comment type="similarity">
    <text evidence="6">Belongs to the glycosyltransferase 8 family.</text>
</comment>
<comment type="sequence caution" evidence="6">
    <conflict type="erroneous gene model prediction">
        <sequence resource="EMBL-CDS" id="CAC01746"/>
    </conflict>
</comment>